<name>RL18_BACC2</name>
<gene>
    <name evidence="1" type="primary">rplR</name>
    <name type="ordered locus">BCG9842_B5179</name>
</gene>
<protein>
    <recommendedName>
        <fullName evidence="1">Large ribosomal subunit protein uL18</fullName>
    </recommendedName>
    <alternativeName>
        <fullName evidence="2">50S ribosomal protein L18</fullName>
    </alternativeName>
</protein>
<keyword id="KW-0687">Ribonucleoprotein</keyword>
<keyword id="KW-0689">Ribosomal protein</keyword>
<keyword id="KW-0694">RNA-binding</keyword>
<keyword id="KW-0699">rRNA-binding</keyword>
<organism>
    <name type="scientific">Bacillus cereus (strain G9842)</name>
    <dbReference type="NCBI Taxonomy" id="405531"/>
    <lineage>
        <taxon>Bacteria</taxon>
        <taxon>Bacillati</taxon>
        <taxon>Bacillota</taxon>
        <taxon>Bacilli</taxon>
        <taxon>Bacillales</taxon>
        <taxon>Bacillaceae</taxon>
        <taxon>Bacillus</taxon>
        <taxon>Bacillus cereus group</taxon>
    </lineage>
</organism>
<reference key="1">
    <citation type="submission" date="2008-10" db="EMBL/GenBank/DDBJ databases">
        <title>Genome sequence of Bacillus cereus G9842.</title>
        <authorList>
            <person name="Dodson R.J."/>
            <person name="Durkin A.S."/>
            <person name="Rosovitz M.J."/>
            <person name="Rasko D.A."/>
            <person name="Hoffmaster A."/>
            <person name="Ravel J."/>
            <person name="Sutton G."/>
        </authorList>
    </citation>
    <scope>NUCLEOTIDE SEQUENCE [LARGE SCALE GENOMIC DNA]</scope>
    <source>
        <strain>G9842</strain>
    </source>
</reference>
<evidence type="ECO:0000255" key="1">
    <source>
        <dbReference type="HAMAP-Rule" id="MF_01337"/>
    </source>
</evidence>
<evidence type="ECO:0000305" key="2"/>
<feature type="chain" id="PRO_1000142617" description="Large ribosomal subunit protein uL18">
    <location>
        <begin position="1"/>
        <end position="120"/>
    </location>
</feature>
<dbReference type="EMBL" id="CP001186">
    <property type="protein sequence ID" value="ACK94969.1"/>
    <property type="molecule type" value="Genomic_DNA"/>
</dbReference>
<dbReference type="RefSeq" id="WP_000628818.1">
    <property type="nucleotide sequence ID" value="NC_011772.1"/>
</dbReference>
<dbReference type="SMR" id="B7IT35"/>
<dbReference type="GeneID" id="92887819"/>
<dbReference type="KEGG" id="bcg:BCG9842_B5179"/>
<dbReference type="HOGENOM" id="CLU_098841_0_1_9"/>
<dbReference type="Proteomes" id="UP000006744">
    <property type="component" value="Chromosome"/>
</dbReference>
<dbReference type="GO" id="GO:0022625">
    <property type="term" value="C:cytosolic large ribosomal subunit"/>
    <property type="evidence" value="ECO:0007669"/>
    <property type="project" value="TreeGrafter"/>
</dbReference>
<dbReference type="GO" id="GO:0008097">
    <property type="term" value="F:5S rRNA binding"/>
    <property type="evidence" value="ECO:0007669"/>
    <property type="project" value="TreeGrafter"/>
</dbReference>
<dbReference type="GO" id="GO:0003735">
    <property type="term" value="F:structural constituent of ribosome"/>
    <property type="evidence" value="ECO:0007669"/>
    <property type="project" value="InterPro"/>
</dbReference>
<dbReference type="GO" id="GO:0006412">
    <property type="term" value="P:translation"/>
    <property type="evidence" value="ECO:0007669"/>
    <property type="project" value="UniProtKB-UniRule"/>
</dbReference>
<dbReference type="CDD" id="cd00432">
    <property type="entry name" value="Ribosomal_L18_L5e"/>
    <property type="match status" value="1"/>
</dbReference>
<dbReference type="FunFam" id="3.30.420.100:FF:000001">
    <property type="entry name" value="50S ribosomal protein L18"/>
    <property type="match status" value="1"/>
</dbReference>
<dbReference type="Gene3D" id="3.30.420.100">
    <property type="match status" value="1"/>
</dbReference>
<dbReference type="HAMAP" id="MF_01337_B">
    <property type="entry name" value="Ribosomal_uL18_B"/>
    <property type="match status" value="1"/>
</dbReference>
<dbReference type="InterPro" id="IPR004389">
    <property type="entry name" value="Ribosomal_uL18_bac-type"/>
</dbReference>
<dbReference type="InterPro" id="IPR005484">
    <property type="entry name" value="Ribosomal_uL18_bac/euk"/>
</dbReference>
<dbReference type="NCBIfam" id="TIGR00060">
    <property type="entry name" value="L18_bact"/>
    <property type="match status" value="1"/>
</dbReference>
<dbReference type="PANTHER" id="PTHR12899">
    <property type="entry name" value="39S RIBOSOMAL PROTEIN L18, MITOCHONDRIAL"/>
    <property type="match status" value="1"/>
</dbReference>
<dbReference type="PANTHER" id="PTHR12899:SF3">
    <property type="entry name" value="LARGE RIBOSOMAL SUBUNIT PROTEIN UL18M"/>
    <property type="match status" value="1"/>
</dbReference>
<dbReference type="Pfam" id="PF00861">
    <property type="entry name" value="Ribosomal_L18p"/>
    <property type="match status" value="1"/>
</dbReference>
<dbReference type="SUPFAM" id="SSF53137">
    <property type="entry name" value="Translational machinery components"/>
    <property type="match status" value="1"/>
</dbReference>
<proteinExistence type="inferred from homology"/>
<comment type="function">
    <text evidence="1">This is one of the proteins that bind and probably mediate the attachment of the 5S RNA into the large ribosomal subunit, where it forms part of the central protuberance.</text>
</comment>
<comment type="subunit">
    <text evidence="1">Part of the 50S ribosomal subunit; part of the 5S rRNA/L5/L18/L25 subcomplex. Contacts the 5S and 23S rRNAs.</text>
</comment>
<comment type="similarity">
    <text evidence="1">Belongs to the universal ribosomal protein uL18 family.</text>
</comment>
<accession>B7IT35</accession>
<sequence>MITKADKNATRKKRHARVRAKLTGTAERPRLNVFRSNQHIYAQVIDDVNGVTLVSASTLDKDLALNGTSNTEAATKVGESVAKRAVEKGVKEVVFDRGGYLYHGRVKALAEAAREAGLQF</sequence>